<gene>
    <name evidence="2" type="primary">rpsL</name>
    <name type="ordered locus">BAB1_1260</name>
</gene>
<feature type="chain" id="PRO_0000226378" description="Small ribosomal subunit protein uS12">
    <location>
        <begin position="1"/>
        <end position="123"/>
    </location>
</feature>
<feature type="modified residue" description="3-methylthioaspartic acid" evidence="1">
    <location>
        <position position="89"/>
    </location>
</feature>
<reference key="1">
    <citation type="journal article" date="2005" name="Infect. Immun.">
        <title>Whole-genome analyses of speciation events in pathogenic Brucellae.</title>
        <authorList>
            <person name="Chain P.S."/>
            <person name="Comerci D.J."/>
            <person name="Tolmasky M.E."/>
            <person name="Larimer F.W."/>
            <person name="Malfatti S.A."/>
            <person name="Vergez L.M."/>
            <person name="Aguero F."/>
            <person name="Land M.L."/>
            <person name="Ugalde R.A."/>
            <person name="Garcia E."/>
        </authorList>
    </citation>
    <scope>NUCLEOTIDE SEQUENCE [LARGE SCALE GENOMIC DNA]</scope>
    <source>
        <strain>2308</strain>
    </source>
</reference>
<organism>
    <name type="scientific">Brucella abortus (strain 2308)</name>
    <dbReference type="NCBI Taxonomy" id="359391"/>
    <lineage>
        <taxon>Bacteria</taxon>
        <taxon>Pseudomonadati</taxon>
        <taxon>Pseudomonadota</taxon>
        <taxon>Alphaproteobacteria</taxon>
        <taxon>Hyphomicrobiales</taxon>
        <taxon>Brucellaceae</taxon>
        <taxon>Brucella/Ochrobactrum group</taxon>
        <taxon>Brucella</taxon>
    </lineage>
</organism>
<comment type="function">
    <text evidence="2">With S4 and S5 plays an important role in translational accuracy.</text>
</comment>
<comment type="function">
    <text evidence="2">Interacts with and stabilizes bases of the 16S rRNA that are involved in tRNA selection in the A site and with the mRNA backbone. Located at the interface of the 30S and 50S subunits, it traverses the body of the 30S subunit contacting proteins on the other side and probably holding the rRNA structure together. The combined cluster of proteins S8, S12 and S17 appears to hold together the shoulder and platform of the 30S subunit.</text>
</comment>
<comment type="subunit">
    <text evidence="2">Part of the 30S ribosomal subunit. Contacts proteins S8 and S17. May interact with IF1 in the 30S initiation complex.</text>
</comment>
<comment type="similarity">
    <text evidence="2">Belongs to the universal ribosomal protein uS12 family.</text>
</comment>
<proteinExistence type="inferred from homology"/>
<evidence type="ECO:0000250" key="1"/>
<evidence type="ECO:0000255" key="2">
    <source>
        <dbReference type="HAMAP-Rule" id="MF_00403"/>
    </source>
</evidence>
<evidence type="ECO:0000305" key="3"/>
<protein>
    <recommendedName>
        <fullName evidence="2">Small ribosomal subunit protein uS12</fullName>
    </recommendedName>
    <alternativeName>
        <fullName evidence="3">30S ribosomal protein S12</fullName>
    </alternativeName>
</protein>
<keyword id="KW-0488">Methylation</keyword>
<keyword id="KW-1185">Reference proteome</keyword>
<keyword id="KW-0687">Ribonucleoprotein</keyword>
<keyword id="KW-0689">Ribosomal protein</keyword>
<keyword id="KW-0694">RNA-binding</keyword>
<keyword id="KW-0699">rRNA-binding</keyword>
<keyword id="KW-0820">tRNA-binding</keyword>
<dbReference type="EMBL" id="AM040264">
    <property type="protein sequence ID" value="CAJ11216.1"/>
    <property type="molecule type" value="Genomic_DNA"/>
</dbReference>
<dbReference type="RefSeq" id="WP_002964366.1">
    <property type="nucleotide sequence ID" value="NZ_KN046823.1"/>
</dbReference>
<dbReference type="SMR" id="Q2YLZ8"/>
<dbReference type="STRING" id="359391.BAB1_1260"/>
<dbReference type="GeneID" id="93016435"/>
<dbReference type="KEGG" id="bmf:BAB1_1260"/>
<dbReference type="PATRIC" id="fig|359391.11.peg.160"/>
<dbReference type="HOGENOM" id="CLU_104295_1_2_5"/>
<dbReference type="PRO" id="PR:Q2YLZ8"/>
<dbReference type="Proteomes" id="UP000002719">
    <property type="component" value="Chromosome I"/>
</dbReference>
<dbReference type="GO" id="GO:0015935">
    <property type="term" value="C:small ribosomal subunit"/>
    <property type="evidence" value="ECO:0007669"/>
    <property type="project" value="InterPro"/>
</dbReference>
<dbReference type="GO" id="GO:0019843">
    <property type="term" value="F:rRNA binding"/>
    <property type="evidence" value="ECO:0007669"/>
    <property type="project" value="UniProtKB-UniRule"/>
</dbReference>
<dbReference type="GO" id="GO:0003735">
    <property type="term" value="F:structural constituent of ribosome"/>
    <property type="evidence" value="ECO:0007669"/>
    <property type="project" value="InterPro"/>
</dbReference>
<dbReference type="GO" id="GO:0000049">
    <property type="term" value="F:tRNA binding"/>
    <property type="evidence" value="ECO:0007669"/>
    <property type="project" value="UniProtKB-UniRule"/>
</dbReference>
<dbReference type="GO" id="GO:0006412">
    <property type="term" value="P:translation"/>
    <property type="evidence" value="ECO:0007669"/>
    <property type="project" value="UniProtKB-UniRule"/>
</dbReference>
<dbReference type="CDD" id="cd03368">
    <property type="entry name" value="Ribosomal_S12"/>
    <property type="match status" value="1"/>
</dbReference>
<dbReference type="FunFam" id="2.40.50.140:FF:000001">
    <property type="entry name" value="30S ribosomal protein S12"/>
    <property type="match status" value="1"/>
</dbReference>
<dbReference type="Gene3D" id="2.40.50.140">
    <property type="entry name" value="Nucleic acid-binding proteins"/>
    <property type="match status" value="1"/>
</dbReference>
<dbReference type="HAMAP" id="MF_00403_B">
    <property type="entry name" value="Ribosomal_uS12_B"/>
    <property type="match status" value="1"/>
</dbReference>
<dbReference type="InterPro" id="IPR012340">
    <property type="entry name" value="NA-bd_OB-fold"/>
</dbReference>
<dbReference type="InterPro" id="IPR006032">
    <property type="entry name" value="Ribosomal_uS12"/>
</dbReference>
<dbReference type="InterPro" id="IPR005679">
    <property type="entry name" value="Ribosomal_uS12_bac"/>
</dbReference>
<dbReference type="NCBIfam" id="TIGR00981">
    <property type="entry name" value="rpsL_bact"/>
    <property type="match status" value="1"/>
</dbReference>
<dbReference type="PANTHER" id="PTHR11652">
    <property type="entry name" value="30S RIBOSOMAL PROTEIN S12 FAMILY MEMBER"/>
    <property type="match status" value="1"/>
</dbReference>
<dbReference type="Pfam" id="PF00164">
    <property type="entry name" value="Ribosom_S12_S23"/>
    <property type="match status" value="1"/>
</dbReference>
<dbReference type="PIRSF" id="PIRSF002133">
    <property type="entry name" value="Ribosomal_S12/S23"/>
    <property type="match status" value="1"/>
</dbReference>
<dbReference type="PRINTS" id="PR01034">
    <property type="entry name" value="RIBOSOMALS12"/>
</dbReference>
<dbReference type="SUPFAM" id="SSF50249">
    <property type="entry name" value="Nucleic acid-binding proteins"/>
    <property type="match status" value="1"/>
</dbReference>
<dbReference type="PROSITE" id="PS00055">
    <property type="entry name" value="RIBOSOMAL_S12"/>
    <property type="match status" value="1"/>
</dbReference>
<sequence>MPTVNQLIRKPRTAPVKRNKVPALQANPQKRGVCTRVYTTTPKKPNSALRKVAKVRLTNGFEVIGYIPGEGHNLQEHSVVMIRGGRVKDLPGVRYHIIRGVLDTQGVKNRKQRRSKYGAKRPK</sequence>
<accession>Q2YLZ8</accession>
<name>RS12_BRUA2</name>